<sequence length="410" mass="45633">MTPDSSPSSVDDPLFESGHRIFANKDLLKIGHVPEADRIVGRDEEISKLAKRLNGAVHGYSPENVMIYGKTGTGKSLVSKHVCQRAQNAAQDGVEIGTAYIDCAEDNTETQAISSLAAKLNDESSTGISVPHTGLSTSKYYKLLWKTLDAQFDSVIIILDEIDLMNDDSVLMKLSRAEEAGKIDCSVGVIAISNKIQYVDNVNERVKSSFQHKELFFKPYDANQLREIMFNREDAFQDGVLSEDVIPLSAAFAAQEHGDARKAIDILRHAGEVAYEAGAELVTEEHVRQAQQHAEKDRFRELVNGAPTQAKAALLALTELSVNSNDDAFLTSRVYDQYEHICNHLDMDILSVRRFRDILKEQAFLGVVEIEKINKGSAGGIHLQNRLIEDSQVVRETILEDSRMQDWTRE</sequence>
<name>CDC64_HALSA</name>
<protein>
    <recommendedName>
        <fullName evidence="1">ORC1-type DNA replication protein 4</fullName>
    </recommendedName>
</protein>
<feature type="chain" id="PRO_0000151001" description="ORC1-type DNA replication protein 4">
    <location>
        <begin position="1"/>
        <end position="410"/>
    </location>
</feature>
<feature type="binding site" evidence="1">
    <location>
        <begin position="73"/>
        <end position="77"/>
    </location>
    <ligand>
        <name>ATP</name>
        <dbReference type="ChEBI" id="CHEBI:30616"/>
    </ligand>
</feature>
<feature type="binding site" evidence="1">
    <location>
        <position position="220"/>
    </location>
    <ligand>
        <name>ATP</name>
        <dbReference type="ChEBI" id="CHEBI:30616"/>
    </ligand>
</feature>
<feature type="binding site" evidence="1">
    <location>
        <position position="232"/>
    </location>
    <ligand>
        <name>ATP</name>
        <dbReference type="ChEBI" id="CHEBI:30616"/>
    </ligand>
</feature>
<geneLocation type="plasmid">
    <name>pNRC200</name>
</geneLocation>
<proteinExistence type="inferred from homology"/>
<evidence type="ECO:0000255" key="1">
    <source>
        <dbReference type="HAMAP-Rule" id="MF_01407"/>
    </source>
</evidence>
<evidence type="ECO:0000269" key="2">
    <source>
    </source>
</evidence>
<accession>Q9HHJ7</accession>
<reference key="1">
    <citation type="journal article" date="2000" name="Proc. Natl. Acad. Sci. U.S.A.">
        <title>Genome sequence of Halobacterium species NRC-1.</title>
        <authorList>
            <person name="Ng W.V."/>
            <person name="Kennedy S.P."/>
            <person name="Mahairas G.G."/>
            <person name="Berquist B."/>
            <person name="Pan M."/>
            <person name="Shukla H.D."/>
            <person name="Lasky S.R."/>
            <person name="Baliga N.S."/>
            <person name="Thorsson V."/>
            <person name="Sbrogna J."/>
            <person name="Swartzell S."/>
            <person name="Weir D."/>
            <person name="Hall J."/>
            <person name="Dahl T.A."/>
            <person name="Welti R."/>
            <person name="Goo Y.A."/>
            <person name="Leithauser B."/>
            <person name="Keller K."/>
            <person name="Cruz R."/>
            <person name="Danson M.J."/>
            <person name="Hough D.W."/>
            <person name="Maddocks D.G."/>
            <person name="Jablonski P.E."/>
            <person name="Krebs M.P."/>
            <person name="Angevine C.M."/>
            <person name="Dale H."/>
            <person name="Isenbarger T.A."/>
            <person name="Peck R.F."/>
            <person name="Pohlschroder M."/>
            <person name="Spudich J.L."/>
            <person name="Jung K.-H."/>
            <person name="Alam M."/>
            <person name="Freitas T."/>
            <person name="Hou S."/>
            <person name="Daniels C.J."/>
            <person name="Dennis P.P."/>
            <person name="Omer A.D."/>
            <person name="Ebhardt H."/>
            <person name="Lowe T.M."/>
            <person name="Liang P."/>
            <person name="Riley M."/>
            <person name="Hood L."/>
            <person name="DasSarma S."/>
        </authorList>
    </citation>
    <scope>NUCLEOTIDE SEQUENCE [LARGE SCALE GENOMIC DNA]</scope>
    <source>
        <strain>ATCC 700922 / JCM 11081 / NRC-1</strain>
    </source>
</reference>
<reference key="2">
    <citation type="journal article" date="2007" name="BMC Genet.">
        <title>Essential and non-essential DNA replication genes in the model halophilic Archaeon, Halobacterium sp. NRC-1.</title>
        <authorList>
            <person name="Berquist B.R."/>
            <person name="DasSarma P."/>
            <person name="DasSarma S."/>
        </authorList>
    </citation>
    <scope>DISRUPTION PHENOTYPE</scope>
    <source>
        <strain>ATCC 700922 / JCM 11081 / NRC-1</strain>
    </source>
</reference>
<dbReference type="EMBL" id="AE004438">
    <property type="protein sequence ID" value="AAG20983.1"/>
    <property type="molecule type" value="Genomic_DNA"/>
</dbReference>
<dbReference type="RefSeq" id="WP_010904194.1">
    <property type="nucleotide sequence ID" value="NC_002608.1"/>
</dbReference>
<dbReference type="SMR" id="Q9HHJ7"/>
<dbReference type="GeneID" id="1449358"/>
<dbReference type="KEGG" id="hal:VNG_6363G"/>
<dbReference type="PATRIC" id="fig|64091.14.peg.2322"/>
<dbReference type="HOGENOM" id="CLU_025112_2_1_2"/>
<dbReference type="InParanoid" id="Q9HHJ7"/>
<dbReference type="OrthoDB" id="195574at2157"/>
<dbReference type="Proteomes" id="UP000000554">
    <property type="component" value="Plasmid pNRC200"/>
</dbReference>
<dbReference type="GO" id="GO:0005524">
    <property type="term" value="F:ATP binding"/>
    <property type="evidence" value="ECO:0007669"/>
    <property type="project" value="UniProtKB-UniRule"/>
</dbReference>
<dbReference type="GO" id="GO:0016887">
    <property type="term" value="F:ATP hydrolysis activity"/>
    <property type="evidence" value="ECO:0007669"/>
    <property type="project" value="InterPro"/>
</dbReference>
<dbReference type="GO" id="GO:0006260">
    <property type="term" value="P:DNA replication"/>
    <property type="evidence" value="ECO:0007669"/>
    <property type="project" value="UniProtKB-UniRule"/>
</dbReference>
<dbReference type="CDD" id="cd08768">
    <property type="entry name" value="Cdc6_C"/>
    <property type="match status" value="1"/>
</dbReference>
<dbReference type="FunFam" id="1.10.10.10:FF:000780">
    <property type="entry name" value="ORC1-type DNA replication protein"/>
    <property type="match status" value="1"/>
</dbReference>
<dbReference type="FunFam" id="1.10.8.60:FF:000073">
    <property type="entry name" value="ORC1-type DNA replication protein"/>
    <property type="match status" value="1"/>
</dbReference>
<dbReference type="FunFam" id="3.40.50.300:FF:000930">
    <property type="entry name" value="ORC1-type DNA replication protein"/>
    <property type="match status" value="1"/>
</dbReference>
<dbReference type="Gene3D" id="1.10.8.60">
    <property type="match status" value="1"/>
</dbReference>
<dbReference type="Gene3D" id="3.40.50.300">
    <property type="entry name" value="P-loop containing nucleotide triphosphate hydrolases"/>
    <property type="match status" value="1"/>
</dbReference>
<dbReference type="Gene3D" id="1.10.10.10">
    <property type="entry name" value="Winged helix-like DNA-binding domain superfamily/Winged helix DNA-binding domain"/>
    <property type="match status" value="1"/>
</dbReference>
<dbReference type="HAMAP" id="MF_01407">
    <property type="entry name" value="ORC1_type_DNA_replic_protein"/>
    <property type="match status" value="1"/>
</dbReference>
<dbReference type="InterPro" id="IPR003593">
    <property type="entry name" value="AAA+_ATPase"/>
</dbReference>
<dbReference type="InterPro" id="IPR041664">
    <property type="entry name" value="AAA_16"/>
</dbReference>
<dbReference type="InterPro" id="IPR015163">
    <property type="entry name" value="Cdc6_C"/>
</dbReference>
<dbReference type="InterPro" id="IPR055237">
    <property type="entry name" value="Cdc6_lid"/>
</dbReference>
<dbReference type="InterPro" id="IPR050311">
    <property type="entry name" value="ORC1/CDC6"/>
</dbReference>
<dbReference type="InterPro" id="IPR014277">
    <property type="entry name" value="Orc1/Cdc6_arc"/>
</dbReference>
<dbReference type="InterPro" id="IPR027417">
    <property type="entry name" value="P-loop_NTPase"/>
</dbReference>
<dbReference type="InterPro" id="IPR036388">
    <property type="entry name" value="WH-like_DNA-bd_sf"/>
</dbReference>
<dbReference type="InterPro" id="IPR036390">
    <property type="entry name" value="WH_DNA-bd_sf"/>
</dbReference>
<dbReference type="NCBIfam" id="TIGR02928">
    <property type="entry name" value="orc1/cdc6 family replication initiation protein"/>
    <property type="match status" value="1"/>
</dbReference>
<dbReference type="PANTHER" id="PTHR10763">
    <property type="entry name" value="CELL DIVISION CONTROL PROTEIN 6-RELATED"/>
    <property type="match status" value="1"/>
</dbReference>
<dbReference type="PANTHER" id="PTHR10763:SF22">
    <property type="entry name" value="ORC1-TYPE DNA REPLICATION PROTEIN"/>
    <property type="match status" value="1"/>
</dbReference>
<dbReference type="Pfam" id="PF13191">
    <property type="entry name" value="AAA_16"/>
    <property type="match status" value="1"/>
</dbReference>
<dbReference type="Pfam" id="PF09079">
    <property type="entry name" value="Cdc6_C"/>
    <property type="match status" value="1"/>
</dbReference>
<dbReference type="Pfam" id="PF22703">
    <property type="entry name" value="Cdc6_lid"/>
    <property type="match status" value="1"/>
</dbReference>
<dbReference type="SMART" id="SM00382">
    <property type="entry name" value="AAA"/>
    <property type="match status" value="1"/>
</dbReference>
<dbReference type="SMART" id="SM01074">
    <property type="entry name" value="Cdc6_C"/>
    <property type="match status" value="1"/>
</dbReference>
<dbReference type="SUPFAM" id="SSF52540">
    <property type="entry name" value="P-loop containing nucleoside triphosphate hydrolases"/>
    <property type="match status" value="1"/>
</dbReference>
<dbReference type="SUPFAM" id="SSF46785">
    <property type="entry name" value="Winged helix' DNA-binding domain"/>
    <property type="match status" value="1"/>
</dbReference>
<comment type="function">
    <text evidence="1">Involved in regulation of DNA replication.</text>
</comment>
<comment type="disruption phenotype">
    <text evidence="2">Not essential for normal growth.</text>
</comment>
<comment type="similarity">
    <text evidence="1">Belongs to the CDC6/cdc18 family.</text>
</comment>
<organism>
    <name type="scientific">Halobacterium salinarum (strain ATCC 700922 / JCM 11081 / NRC-1)</name>
    <name type="common">Halobacterium halobium</name>
    <dbReference type="NCBI Taxonomy" id="64091"/>
    <lineage>
        <taxon>Archaea</taxon>
        <taxon>Methanobacteriati</taxon>
        <taxon>Methanobacteriota</taxon>
        <taxon>Stenosarchaea group</taxon>
        <taxon>Halobacteria</taxon>
        <taxon>Halobacteriales</taxon>
        <taxon>Halobacteriaceae</taxon>
        <taxon>Halobacterium</taxon>
        <taxon>Halobacterium salinarum NRC-34001</taxon>
    </lineage>
</organism>
<keyword id="KW-0067">ATP-binding</keyword>
<keyword id="KW-0235">DNA replication</keyword>
<keyword id="KW-0547">Nucleotide-binding</keyword>
<keyword id="KW-0614">Plasmid</keyword>
<keyword id="KW-1185">Reference proteome</keyword>
<gene>
    <name type="primary">orc4</name>
    <name type="ordered locus">VNG_6363G</name>
</gene>